<protein>
    <recommendedName>
        <fullName evidence="1">Large ribosomal subunit protein uL14</fullName>
    </recommendedName>
    <alternativeName>
        <fullName evidence="2">50S ribosomal protein L14</fullName>
    </alternativeName>
</protein>
<evidence type="ECO:0000255" key="1">
    <source>
        <dbReference type="HAMAP-Rule" id="MF_01367"/>
    </source>
</evidence>
<evidence type="ECO:0000305" key="2"/>
<comment type="function">
    <text evidence="1">Binds to 23S rRNA. Forms part of two intersubunit bridges in the 70S ribosome.</text>
</comment>
<comment type="subunit">
    <text evidence="1">Part of the 50S ribosomal subunit. Forms a cluster with proteins L3 and L19. In the 70S ribosome, L14 and L19 interact and together make contacts with the 16S rRNA in bridges B5 and B8.</text>
</comment>
<comment type="similarity">
    <text evidence="1">Belongs to the universal ribosomal protein uL14 family.</text>
</comment>
<reference key="1">
    <citation type="submission" date="2007-09" db="EMBL/GenBank/DDBJ databases">
        <title>Complete genome sequencing of Rickettsia bellii.</title>
        <authorList>
            <person name="Madan A."/>
            <person name="Lee H."/>
            <person name="Madan A."/>
            <person name="Yoon J.-G."/>
            <person name="Ryu G.-Y."/>
            <person name="Dasch G."/>
            <person name="Ereemeva M."/>
        </authorList>
    </citation>
    <scope>NUCLEOTIDE SEQUENCE [LARGE SCALE GENOMIC DNA]</scope>
    <source>
        <strain>OSU 85-389</strain>
    </source>
</reference>
<proteinExistence type="inferred from homology"/>
<feature type="chain" id="PRO_0000355833" description="Large ribosomal subunit protein uL14">
    <location>
        <begin position="1"/>
        <end position="122"/>
    </location>
</feature>
<gene>
    <name evidence="1" type="primary">rplN</name>
    <name type="ordered locus">A1I_02085</name>
</gene>
<accession>A8GVC4</accession>
<dbReference type="EMBL" id="CP000849">
    <property type="protein sequence ID" value="ABV78801.1"/>
    <property type="molecule type" value="Genomic_DNA"/>
</dbReference>
<dbReference type="RefSeq" id="WP_011477711.1">
    <property type="nucleotide sequence ID" value="NC_009883.1"/>
</dbReference>
<dbReference type="SMR" id="A8GVC4"/>
<dbReference type="KEGG" id="rbo:A1I_02085"/>
<dbReference type="HOGENOM" id="CLU_095071_2_1_5"/>
<dbReference type="GO" id="GO:0022625">
    <property type="term" value="C:cytosolic large ribosomal subunit"/>
    <property type="evidence" value="ECO:0007669"/>
    <property type="project" value="TreeGrafter"/>
</dbReference>
<dbReference type="GO" id="GO:0070180">
    <property type="term" value="F:large ribosomal subunit rRNA binding"/>
    <property type="evidence" value="ECO:0007669"/>
    <property type="project" value="TreeGrafter"/>
</dbReference>
<dbReference type="GO" id="GO:0003735">
    <property type="term" value="F:structural constituent of ribosome"/>
    <property type="evidence" value="ECO:0007669"/>
    <property type="project" value="InterPro"/>
</dbReference>
<dbReference type="GO" id="GO:0006412">
    <property type="term" value="P:translation"/>
    <property type="evidence" value="ECO:0007669"/>
    <property type="project" value="UniProtKB-UniRule"/>
</dbReference>
<dbReference type="CDD" id="cd00337">
    <property type="entry name" value="Ribosomal_uL14"/>
    <property type="match status" value="1"/>
</dbReference>
<dbReference type="FunFam" id="2.40.150.20:FF:000001">
    <property type="entry name" value="50S ribosomal protein L14"/>
    <property type="match status" value="1"/>
</dbReference>
<dbReference type="Gene3D" id="2.40.150.20">
    <property type="entry name" value="Ribosomal protein L14"/>
    <property type="match status" value="1"/>
</dbReference>
<dbReference type="HAMAP" id="MF_01367">
    <property type="entry name" value="Ribosomal_uL14"/>
    <property type="match status" value="1"/>
</dbReference>
<dbReference type="InterPro" id="IPR000218">
    <property type="entry name" value="Ribosomal_uL14"/>
</dbReference>
<dbReference type="InterPro" id="IPR005745">
    <property type="entry name" value="Ribosomal_uL14_bac-type"/>
</dbReference>
<dbReference type="InterPro" id="IPR019972">
    <property type="entry name" value="Ribosomal_uL14_CS"/>
</dbReference>
<dbReference type="InterPro" id="IPR036853">
    <property type="entry name" value="Ribosomal_uL14_sf"/>
</dbReference>
<dbReference type="NCBIfam" id="TIGR01067">
    <property type="entry name" value="rplN_bact"/>
    <property type="match status" value="1"/>
</dbReference>
<dbReference type="PANTHER" id="PTHR11761">
    <property type="entry name" value="50S/60S RIBOSOMAL PROTEIN L14/L23"/>
    <property type="match status" value="1"/>
</dbReference>
<dbReference type="PANTHER" id="PTHR11761:SF3">
    <property type="entry name" value="LARGE RIBOSOMAL SUBUNIT PROTEIN UL14M"/>
    <property type="match status" value="1"/>
</dbReference>
<dbReference type="Pfam" id="PF00238">
    <property type="entry name" value="Ribosomal_L14"/>
    <property type="match status" value="1"/>
</dbReference>
<dbReference type="SMART" id="SM01374">
    <property type="entry name" value="Ribosomal_L14"/>
    <property type="match status" value="1"/>
</dbReference>
<dbReference type="SUPFAM" id="SSF50193">
    <property type="entry name" value="Ribosomal protein L14"/>
    <property type="match status" value="1"/>
</dbReference>
<dbReference type="PROSITE" id="PS00049">
    <property type="entry name" value="RIBOSOMAL_L14"/>
    <property type="match status" value="1"/>
</dbReference>
<keyword id="KW-0687">Ribonucleoprotein</keyword>
<keyword id="KW-0689">Ribosomal protein</keyword>
<keyword id="KW-0694">RNA-binding</keyword>
<keyword id="KW-0699">rRNA-binding</keyword>
<name>RL14_RICB8</name>
<organism>
    <name type="scientific">Rickettsia bellii (strain OSU 85-389)</name>
    <dbReference type="NCBI Taxonomy" id="391896"/>
    <lineage>
        <taxon>Bacteria</taxon>
        <taxon>Pseudomonadati</taxon>
        <taxon>Pseudomonadota</taxon>
        <taxon>Alphaproteobacteria</taxon>
        <taxon>Rickettsiales</taxon>
        <taxon>Rickettsiaceae</taxon>
        <taxon>Rickettsieae</taxon>
        <taxon>Rickettsia</taxon>
        <taxon>belli group</taxon>
    </lineage>
</organism>
<sequence length="122" mass="13231">MIQMQSILEVADNSGAKKVMCIKVLGGSHHMVAKLGDVIVVSIKEAIPGGKVKKGDVYKGVIVRTKTGVVRADGSTIKFDKNALVLLNKQDEPIGTRVFGPVTRELRAKKYVRIMSLAEEVL</sequence>